<protein>
    <recommendedName>
        <fullName>Putative RNase MJ1380</fullName>
        <ecNumber evidence="2">3.1.-.-</ecNumber>
    </recommendedName>
    <alternativeName>
        <fullName>Putative toxin MJ1380</fullName>
    </alternativeName>
</protein>
<reference key="1">
    <citation type="journal article" date="1996" name="Science">
        <title>Complete genome sequence of the methanogenic archaeon, Methanococcus jannaschii.</title>
        <authorList>
            <person name="Bult C.J."/>
            <person name="White O."/>
            <person name="Olsen G.J."/>
            <person name="Zhou L."/>
            <person name="Fleischmann R.D."/>
            <person name="Sutton G.G."/>
            <person name="Blake J.A."/>
            <person name="FitzGerald L.M."/>
            <person name="Clayton R.A."/>
            <person name="Gocayne J.D."/>
            <person name="Kerlavage A.R."/>
            <person name="Dougherty B.A."/>
            <person name="Tomb J.-F."/>
            <person name="Adams M.D."/>
            <person name="Reich C.I."/>
            <person name="Overbeek R."/>
            <person name="Kirkness E.F."/>
            <person name="Weinstock K.G."/>
            <person name="Merrick J.M."/>
            <person name="Glodek A."/>
            <person name="Scott J.L."/>
            <person name="Geoghagen N.S.M."/>
            <person name="Weidman J.F."/>
            <person name="Fuhrmann J.L."/>
            <person name="Nguyen D."/>
            <person name="Utterback T.R."/>
            <person name="Kelley J.M."/>
            <person name="Peterson J.D."/>
            <person name="Sadow P.W."/>
            <person name="Hanna M.C."/>
            <person name="Cotton M.D."/>
            <person name="Roberts K.M."/>
            <person name="Hurst M.A."/>
            <person name="Kaine B.P."/>
            <person name="Borodovsky M."/>
            <person name="Klenk H.-P."/>
            <person name="Fraser C.M."/>
            <person name="Smith H.O."/>
            <person name="Woese C.R."/>
            <person name="Venter J.C."/>
        </authorList>
    </citation>
    <scope>NUCLEOTIDE SEQUENCE [LARGE SCALE GENOMIC DNA]</scope>
    <source>
        <strain>ATCC 43067 / DSM 2661 / JAL-1 / JCM 10045 / NBRC 100440</strain>
    </source>
</reference>
<dbReference type="EC" id="3.1.-.-" evidence="2"/>
<dbReference type="EMBL" id="L77117">
    <property type="protein sequence ID" value="AAB99390.1"/>
    <property type="status" value="ALT_FRAME"/>
    <property type="molecule type" value="Genomic_DNA"/>
</dbReference>
<dbReference type="PIR" id="C64472">
    <property type="entry name" value="C64472"/>
</dbReference>
<dbReference type="SMR" id="Q58775"/>
<dbReference type="FunCoup" id="Q58775">
    <property type="interactions" value="5"/>
</dbReference>
<dbReference type="STRING" id="243232.MJ_1380"/>
<dbReference type="PaxDb" id="243232-MJ_1380"/>
<dbReference type="EnsemblBacteria" id="AAB99390">
    <property type="protein sequence ID" value="AAB99390"/>
    <property type="gene ID" value="MJ_1380"/>
</dbReference>
<dbReference type="KEGG" id="mja:MJ_1380"/>
<dbReference type="eggNOG" id="arCOG05024">
    <property type="taxonomic scope" value="Archaea"/>
</dbReference>
<dbReference type="HOGENOM" id="CLU_142825_4_0_2"/>
<dbReference type="InParanoid" id="Q58775"/>
<dbReference type="PhylomeDB" id="Q58775"/>
<dbReference type="Proteomes" id="UP000000805">
    <property type="component" value="Chromosome"/>
</dbReference>
<dbReference type="GO" id="GO:0110001">
    <property type="term" value="C:toxin-antitoxin complex"/>
    <property type="evidence" value="ECO:0007669"/>
    <property type="project" value="InterPro"/>
</dbReference>
<dbReference type="GO" id="GO:0000166">
    <property type="term" value="F:nucleotide binding"/>
    <property type="evidence" value="ECO:0007669"/>
    <property type="project" value="UniProtKB-KW"/>
</dbReference>
<dbReference type="GO" id="GO:0004540">
    <property type="term" value="F:RNA nuclease activity"/>
    <property type="evidence" value="ECO:0007669"/>
    <property type="project" value="InterPro"/>
</dbReference>
<dbReference type="Gene3D" id="1.20.120.580">
    <property type="entry name" value="bsu32300-like"/>
    <property type="match status" value="1"/>
</dbReference>
<dbReference type="InterPro" id="IPR008201">
    <property type="entry name" value="HepT-like"/>
</dbReference>
<dbReference type="InterPro" id="IPR037038">
    <property type="entry name" value="HepT-like_sf"/>
</dbReference>
<dbReference type="InterPro" id="IPR051813">
    <property type="entry name" value="HepT_RNase_toxin"/>
</dbReference>
<dbReference type="PANTHER" id="PTHR34139:SF1">
    <property type="entry name" value="RNASE MJ1380-RELATED"/>
    <property type="match status" value="1"/>
</dbReference>
<dbReference type="PANTHER" id="PTHR34139">
    <property type="entry name" value="UPF0331 PROTEIN MJ0127"/>
    <property type="match status" value="1"/>
</dbReference>
<dbReference type="Pfam" id="PF01934">
    <property type="entry name" value="HepT-like"/>
    <property type="match status" value="1"/>
</dbReference>
<accession>Q58775</accession>
<gene>
    <name type="ordered locus">MJ1380</name>
</gene>
<evidence type="ECO:0000250" key="1">
    <source>
        <dbReference type="UniProtKB" id="A0A0B0QJR1"/>
    </source>
</evidence>
<evidence type="ECO:0000250" key="2">
    <source>
        <dbReference type="UniProtKB" id="Q8ECH6"/>
    </source>
</evidence>
<evidence type="ECO:0000305" key="3"/>
<feature type="chain" id="PRO_0000158264" description="Putative RNase MJ1380">
    <location>
        <begin position="1"/>
        <end position="109"/>
    </location>
</feature>
<feature type="short sequence motif" description="RX(4)HXY motif" evidence="1">
    <location>
        <begin position="76"/>
        <end position="83"/>
    </location>
</feature>
<feature type="active site" evidence="1">
    <location>
        <position position="76"/>
    </location>
</feature>
<feature type="active site" evidence="1">
    <location>
        <position position="81"/>
    </location>
</feature>
<feature type="modified residue" description="O-di-AMP-tyrosine" evidence="1">
    <location>
        <position position="83"/>
    </location>
</feature>
<sequence length="109" mass="13058">MSKRDVKAFLYDILESANDVIEFTKDIDYNEFINNKMIRYAVIRALEIIGEASRYINNDFREKFPNVPWKEMVGLRNILIHKYFGIDYILLWKIVKEDVPKIKKEVEIV</sequence>
<name>Y1380_METJA</name>
<comment type="function">
    <text evidence="2">Probable toxic component of a putative type VII toxin-antitoxin (TA) system, probably an RNase. Probably neutralized by cognate antitoxin MJ1379. Neutralization may be due to AMPylation by antitoxin MJ1379.</text>
</comment>
<comment type="subunit">
    <text evidence="2">Homodimer, probably forms a complex with cognate antitoxin MJ1379.</text>
</comment>
<comment type="PTM">
    <text evidence="1">Modified by cognate antitoxin MJ1379; probably at least 2 successive AMPylation events occur on Tyr-83.</text>
</comment>
<comment type="similarity">
    <text evidence="3">Belongs to the HepT RNase toxin family.</text>
</comment>
<comment type="sequence caution" evidence="3">
    <conflict type="frameshift">
        <sequence resource="EMBL-CDS" id="AAB99390"/>
    </conflict>
</comment>
<proteinExistence type="inferred from homology"/>
<keyword id="KW-0378">Hydrolase</keyword>
<keyword id="KW-0540">Nuclease</keyword>
<keyword id="KW-0547">Nucleotide-binding</keyword>
<keyword id="KW-0597">Phosphoprotein</keyword>
<keyword id="KW-1185">Reference proteome</keyword>
<keyword id="KW-1277">Toxin-antitoxin system</keyword>
<organism>
    <name type="scientific">Methanocaldococcus jannaschii (strain ATCC 43067 / DSM 2661 / JAL-1 / JCM 10045 / NBRC 100440)</name>
    <name type="common">Methanococcus jannaschii</name>
    <dbReference type="NCBI Taxonomy" id="243232"/>
    <lineage>
        <taxon>Archaea</taxon>
        <taxon>Methanobacteriati</taxon>
        <taxon>Methanobacteriota</taxon>
        <taxon>Methanomada group</taxon>
        <taxon>Methanococci</taxon>
        <taxon>Methanococcales</taxon>
        <taxon>Methanocaldococcaceae</taxon>
        <taxon>Methanocaldococcus</taxon>
    </lineage>
</organism>